<keyword id="KW-0072">Autophagy</keyword>
<keyword id="KW-0963">Cytoplasm</keyword>
<keyword id="KW-0653">Protein transport</keyword>
<keyword id="KW-1185">Reference proteome</keyword>
<keyword id="KW-0813">Transport</keyword>
<keyword id="KW-0833">Ubl conjugation pathway</keyword>
<organism>
    <name type="scientific">Neosartorya fischeri (strain ATCC 1020 / DSM 3700 / CBS 544.65 / FGSC A1164 / JCM 1740 / NRRL 181 / WB 181)</name>
    <name type="common">Aspergillus fischerianus</name>
    <dbReference type="NCBI Taxonomy" id="331117"/>
    <lineage>
        <taxon>Eukaryota</taxon>
        <taxon>Fungi</taxon>
        <taxon>Dikarya</taxon>
        <taxon>Ascomycota</taxon>
        <taxon>Pezizomycotina</taxon>
        <taxon>Eurotiomycetes</taxon>
        <taxon>Eurotiomycetidae</taxon>
        <taxon>Eurotiales</taxon>
        <taxon>Aspergillaceae</taxon>
        <taxon>Aspergillus</taxon>
        <taxon>Aspergillus subgen. Fumigati</taxon>
    </lineage>
</organism>
<proteinExistence type="inferred from homology"/>
<protein>
    <recommendedName>
        <fullName>Autophagy-related protein 3</fullName>
    </recommendedName>
    <alternativeName>
        <fullName>Autophagy-related E2-like conjugation enzyme ATG3</fullName>
    </alternativeName>
</protein>
<feature type="chain" id="PRO_0000317823" description="Autophagy-related protein 3">
    <location>
        <begin position="1"/>
        <end position="353"/>
    </location>
</feature>
<feature type="region of interest" description="Flexible region" evidence="1">
    <location>
        <begin position="85"/>
        <end position="167"/>
    </location>
</feature>
<feature type="region of interest" description="Disordered" evidence="2">
    <location>
        <begin position="135"/>
        <end position="156"/>
    </location>
</feature>
<feature type="region of interest" description="Handle region" evidence="1">
    <location>
        <begin position="249"/>
        <end position="329"/>
    </location>
</feature>
<feature type="compositionally biased region" description="Acidic residues" evidence="2">
    <location>
        <begin position="144"/>
        <end position="156"/>
    </location>
</feature>
<feature type="active site" description="Glycyl thioester intermediate" evidence="1">
    <location>
        <position position="245"/>
    </location>
</feature>
<sequence length="353" mass="39706">MNILHSTLSTWRDRLAPVSRTSTFRTTGQITPEEFVLAGDYLVYKFPTWAWADASSPAKRVSYLPPGKQFLVTRGVPCHRRLNENFAGDAGHEDEIVRDMLSGADADDGDGWLRTGGGRDLAEKQAERIKDVRTVDESGNMGEREDDEEDIPDMEDDDDDEEAIIREPAGKSTTQPIRTYNLYITYSNFYRTPRLYLSGYLSPSEPLPPHLMMEDIVGDYKDKTVTLEDFPWFDGGLKMASVHPCRHASVMKTLLDRADAALKIRRDKLKQAHSAAEANRINSERGLEGLVDETRGLSLNEQQGHAAGGDEWEVLQHDEEDQVAIRVDQYLVVFLKFIASVTPGIEHDFTMGV</sequence>
<reference key="1">
    <citation type="journal article" date="2008" name="PLoS Genet.">
        <title>Genomic islands in the pathogenic filamentous fungus Aspergillus fumigatus.</title>
        <authorList>
            <person name="Fedorova N.D."/>
            <person name="Khaldi N."/>
            <person name="Joardar V.S."/>
            <person name="Maiti R."/>
            <person name="Amedeo P."/>
            <person name="Anderson M.J."/>
            <person name="Crabtree J."/>
            <person name="Silva J.C."/>
            <person name="Badger J.H."/>
            <person name="Albarraq A."/>
            <person name="Angiuoli S."/>
            <person name="Bussey H."/>
            <person name="Bowyer P."/>
            <person name="Cotty P.J."/>
            <person name="Dyer P.S."/>
            <person name="Egan A."/>
            <person name="Galens K."/>
            <person name="Fraser-Liggett C.M."/>
            <person name="Haas B.J."/>
            <person name="Inman J.M."/>
            <person name="Kent R."/>
            <person name="Lemieux S."/>
            <person name="Malavazi I."/>
            <person name="Orvis J."/>
            <person name="Roemer T."/>
            <person name="Ronning C.M."/>
            <person name="Sundaram J.P."/>
            <person name="Sutton G."/>
            <person name="Turner G."/>
            <person name="Venter J.C."/>
            <person name="White O.R."/>
            <person name="Whitty B.R."/>
            <person name="Youngman P."/>
            <person name="Wolfe K.H."/>
            <person name="Goldman G.H."/>
            <person name="Wortman J.R."/>
            <person name="Jiang B."/>
            <person name="Denning D.W."/>
            <person name="Nierman W.C."/>
        </authorList>
    </citation>
    <scope>NUCLEOTIDE SEQUENCE [LARGE SCALE GENOMIC DNA]</scope>
    <source>
        <strain>ATCC 1020 / DSM 3700 / CBS 544.65 / FGSC A1164 / JCM 1740 / NRRL 181 / WB 181</strain>
    </source>
</reference>
<evidence type="ECO:0000250" key="1"/>
<evidence type="ECO:0000256" key="2">
    <source>
        <dbReference type="SAM" id="MobiDB-lite"/>
    </source>
</evidence>
<evidence type="ECO:0000305" key="3"/>
<accession>A1DF15</accession>
<name>ATG3_NEOFI</name>
<comment type="function">
    <text evidence="1">E2 conjugating enzyme required for the cytoplasm to vacuole transport (Cvt) and autophagy. Required for selective autophagic degradation of the nucleus (nucleophagy) as well as for mitophagy which contributes to regulate mitochondrial quantity and quality by eliminating the mitochondria to a basal level to fulfill cellular energy requirements and preventing excess ROS production. Responsible for the E2-like covalent binding of phosphatidylethanolamine to the C-terminal Gly of atg8. The atg12-atg5 conjugate plays a role of an E3 and promotes the transfer of atg8 from atg3 to phosphatidylethanolamine (PE). This step is required for the membrane association of atg8. The formation of the atg8-phosphatidylethanolamine conjugate is essential for autophagy and for the cytoplasm to vacuole transport (Cvt). The atg8-PE conjugate mediates tethering between adjacent membranes and stimulates membrane hemifusion, leading to expansion of the autophagosomal membrane during autophagy (By similarity).</text>
</comment>
<comment type="subunit">
    <text evidence="1">Monomer. Interacts with atg8 through an intermediate thioester bond through the C-terminal Gly of atg8. Also interacts with the 40 amino acid C-terminal region of the E1-like atg7 enzyme. Also interacts with the atg12-atg5 conjugate.</text>
</comment>
<comment type="subcellular location">
    <subcellularLocation>
        <location evidence="1">Cytoplasm</location>
    </subcellularLocation>
</comment>
<comment type="domain">
    <text evidence="1">The N-terminal region is involved in phosphatidylethanolamine-binding and is required for atg8-PE conjugation.</text>
</comment>
<comment type="domain">
    <text evidence="1">The flexible region (FR) is required for atg7-binding.</text>
</comment>
<comment type="domain">
    <text evidence="1">The handle region (HR) contains the atg8 interaction motif (AIM) and mediates binding to atg8. It is crucial for the cytoplasm-to-vacuole targeting pathway (By similarity).</text>
</comment>
<comment type="similarity">
    <text evidence="3">Belongs to the ATG3 family.</text>
</comment>
<dbReference type="EMBL" id="DS027696">
    <property type="protein sequence ID" value="EAW17972.1"/>
    <property type="molecule type" value="Genomic_DNA"/>
</dbReference>
<dbReference type="RefSeq" id="XP_001259869.1">
    <property type="nucleotide sequence ID" value="XM_001259868.1"/>
</dbReference>
<dbReference type="SMR" id="A1DF15"/>
<dbReference type="STRING" id="331117.A1DF15"/>
<dbReference type="EnsemblFungi" id="EAW17972">
    <property type="protein sequence ID" value="EAW17972"/>
    <property type="gene ID" value="NFIA_079130"/>
</dbReference>
<dbReference type="GeneID" id="4586425"/>
<dbReference type="KEGG" id="nfi:NFIA_079130"/>
<dbReference type="VEuPathDB" id="FungiDB:NFIA_079130"/>
<dbReference type="eggNOG" id="KOG2981">
    <property type="taxonomic scope" value="Eukaryota"/>
</dbReference>
<dbReference type="HOGENOM" id="CLU_027518_2_0_1"/>
<dbReference type="OMA" id="HCPTWSW"/>
<dbReference type="OrthoDB" id="1584384at2759"/>
<dbReference type="Proteomes" id="UP000006702">
    <property type="component" value="Unassembled WGS sequence"/>
</dbReference>
<dbReference type="GO" id="GO:0005829">
    <property type="term" value="C:cytosol"/>
    <property type="evidence" value="ECO:0007669"/>
    <property type="project" value="EnsemblFungi"/>
</dbReference>
<dbReference type="GO" id="GO:0005739">
    <property type="term" value="C:mitochondrion"/>
    <property type="evidence" value="ECO:0007669"/>
    <property type="project" value="EnsemblFungi"/>
</dbReference>
<dbReference type="GO" id="GO:0061908">
    <property type="term" value="C:phagophore"/>
    <property type="evidence" value="ECO:0007669"/>
    <property type="project" value="EnsemblFungi"/>
</dbReference>
<dbReference type="GO" id="GO:0000407">
    <property type="term" value="C:phagophore assembly site"/>
    <property type="evidence" value="ECO:0007669"/>
    <property type="project" value="EnsemblFungi"/>
</dbReference>
<dbReference type="GO" id="GO:0019776">
    <property type="term" value="F:Atg8-family ligase activity"/>
    <property type="evidence" value="ECO:0007669"/>
    <property type="project" value="EnsemblFungi"/>
</dbReference>
<dbReference type="GO" id="GO:0000045">
    <property type="term" value="P:autophagosome assembly"/>
    <property type="evidence" value="ECO:0007669"/>
    <property type="project" value="EnsemblFungi"/>
</dbReference>
<dbReference type="GO" id="GO:0000422">
    <property type="term" value="P:autophagy of mitochondrion"/>
    <property type="evidence" value="ECO:0007669"/>
    <property type="project" value="EnsemblFungi"/>
</dbReference>
<dbReference type="GO" id="GO:0061723">
    <property type="term" value="P:glycophagy"/>
    <property type="evidence" value="ECO:0007669"/>
    <property type="project" value="TreeGrafter"/>
</dbReference>
<dbReference type="GO" id="GO:0034727">
    <property type="term" value="P:piecemeal microautophagy of the nucleus"/>
    <property type="evidence" value="ECO:0007669"/>
    <property type="project" value="EnsemblFungi"/>
</dbReference>
<dbReference type="GO" id="GO:0006612">
    <property type="term" value="P:protein targeting to membrane"/>
    <property type="evidence" value="ECO:0007669"/>
    <property type="project" value="EnsemblFungi"/>
</dbReference>
<dbReference type="GO" id="GO:0015031">
    <property type="term" value="P:protein transport"/>
    <property type="evidence" value="ECO:0007669"/>
    <property type="project" value="UniProtKB-KW"/>
</dbReference>
<dbReference type="InterPro" id="IPR007135">
    <property type="entry name" value="Atg3/Atg10"/>
</dbReference>
<dbReference type="PANTHER" id="PTHR12866">
    <property type="entry name" value="UBIQUITIN-LIKE-CONJUGATING ENZYME ATG3"/>
    <property type="match status" value="1"/>
</dbReference>
<dbReference type="PANTHER" id="PTHR12866:SF2">
    <property type="entry name" value="UBIQUITIN-LIKE-CONJUGATING ENZYME ATG3"/>
    <property type="match status" value="1"/>
</dbReference>
<dbReference type="Pfam" id="PF03987">
    <property type="entry name" value="Autophagy_act_C"/>
    <property type="match status" value="1"/>
</dbReference>
<gene>
    <name type="primary">atg3</name>
    <name type="ORF">NFIA_079130</name>
</gene>